<comment type="function">
    <text evidence="1">Catalyzes the transfer of the diacylglyceryl group from phosphatidylglycerol to the sulfhydryl group of the N-terminal cysteine of a prolipoprotein, the first step in the formation of mature lipoproteins.</text>
</comment>
<comment type="catalytic activity">
    <reaction evidence="1">
        <text>L-cysteinyl-[prolipoprotein] + a 1,2-diacyl-sn-glycero-3-phospho-(1'-sn-glycerol) = an S-1,2-diacyl-sn-glyceryl-L-cysteinyl-[prolipoprotein] + sn-glycerol 1-phosphate + H(+)</text>
        <dbReference type="Rhea" id="RHEA:56712"/>
        <dbReference type="Rhea" id="RHEA-COMP:14679"/>
        <dbReference type="Rhea" id="RHEA-COMP:14680"/>
        <dbReference type="ChEBI" id="CHEBI:15378"/>
        <dbReference type="ChEBI" id="CHEBI:29950"/>
        <dbReference type="ChEBI" id="CHEBI:57685"/>
        <dbReference type="ChEBI" id="CHEBI:64716"/>
        <dbReference type="ChEBI" id="CHEBI:140658"/>
        <dbReference type="EC" id="2.5.1.145"/>
    </reaction>
</comment>
<comment type="pathway">
    <text evidence="1">Protein modification; lipoprotein biosynthesis (diacylglyceryl transfer).</text>
</comment>
<comment type="subcellular location">
    <subcellularLocation>
        <location evidence="1">Cell inner membrane</location>
        <topology evidence="1">Multi-pass membrane protein</topology>
    </subcellularLocation>
</comment>
<comment type="similarity">
    <text evidence="1">Belongs to the Lgt family.</text>
</comment>
<protein>
    <recommendedName>
        <fullName evidence="1">Phosphatidylglycerol--prolipoprotein diacylglyceryl transferase</fullName>
        <ecNumber evidence="1">2.5.1.145</ecNumber>
    </recommendedName>
</protein>
<proteinExistence type="inferred from homology"/>
<evidence type="ECO:0000255" key="1">
    <source>
        <dbReference type="HAMAP-Rule" id="MF_01147"/>
    </source>
</evidence>
<reference key="1">
    <citation type="submission" date="2008-02" db="EMBL/GenBank/DDBJ databases">
        <title>Complete sequence of Escherichia coli C str. ATCC 8739.</title>
        <authorList>
            <person name="Copeland A."/>
            <person name="Lucas S."/>
            <person name="Lapidus A."/>
            <person name="Glavina del Rio T."/>
            <person name="Dalin E."/>
            <person name="Tice H."/>
            <person name="Bruce D."/>
            <person name="Goodwin L."/>
            <person name="Pitluck S."/>
            <person name="Kiss H."/>
            <person name="Brettin T."/>
            <person name="Detter J.C."/>
            <person name="Han C."/>
            <person name="Kuske C.R."/>
            <person name="Schmutz J."/>
            <person name="Larimer F."/>
            <person name="Land M."/>
            <person name="Hauser L."/>
            <person name="Kyrpides N."/>
            <person name="Mikhailova N."/>
            <person name="Ingram L."/>
            <person name="Richardson P."/>
        </authorList>
    </citation>
    <scope>NUCLEOTIDE SEQUENCE [LARGE SCALE GENOMIC DNA]</scope>
    <source>
        <strain>ATCC 8739 / DSM 1576 / NBRC 3972 / NCIMB 8545 / WDCM 00012 / Crooks</strain>
    </source>
</reference>
<name>LGT_ECOLC</name>
<dbReference type="EC" id="2.5.1.145" evidence="1"/>
<dbReference type="EMBL" id="CP000946">
    <property type="protein sequence ID" value="ACA76556.1"/>
    <property type="molecule type" value="Genomic_DNA"/>
</dbReference>
<dbReference type="RefSeq" id="WP_000204658.1">
    <property type="nucleotide sequence ID" value="NZ_MTFT01000004.1"/>
</dbReference>
<dbReference type="SMR" id="B1IU16"/>
<dbReference type="GeneID" id="93779170"/>
<dbReference type="KEGG" id="ecl:EcolC_0887"/>
<dbReference type="HOGENOM" id="CLU_013386_1_0_6"/>
<dbReference type="UniPathway" id="UPA00664"/>
<dbReference type="GO" id="GO:0005886">
    <property type="term" value="C:plasma membrane"/>
    <property type="evidence" value="ECO:0007669"/>
    <property type="project" value="UniProtKB-SubCell"/>
</dbReference>
<dbReference type="GO" id="GO:0008961">
    <property type="term" value="F:phosphatidylglycerol-prolipoprotein diacylglyceryl transferase activity"/>
    <property type="evidence" value="ECO:0007669"/>
    <property type="project" value="UniProtKB-UniRule"/>
</dbReference>
<dbReference type="GO" id="GO:0042158">
    <property type="term" value="P:lipoprotein biosynthetic process"/>
    <property type="evidence" value="ECO:0007669"/>
    <property type="project" value="UniProtKB-UniRule"/>
</dbReference>
<dbReference type="HAMAP" id="MF_01147">
    <property type="entry name" value="Lgt"/>
    <property type="match status" value="1"/>
</dbReference>
<dbReference type="InterPro" id="IPR001640">
    <property type="entry name" value="Lgt"/>
</dbReference>
<dbReference type="NCBIfam" id="TIGR00544">
    <property type="entry name" value="lgt"/>
    <property type="match status" value="1"/>
</dbReference>
<dbReference type="PANTHER" id="PTHR30589:SF0">
    <property type="entry name" value="PHOSPHATIDYLGLYCEROL--PROLIPOPROTEIN DIACYLGLYCERYL TRANSFERASE"/>
    <property type="match status" value="1"/>
</dbReference>
<dbReference type="PANTHER" id="PTHR30589">
    <property type="entry name" value="PROLIPOPROTEIN DIACYLGLYCERYL TRANSFERASE"/>
    <property type="match status" value="1"/>
</dbReference>
<dbReference type="Pfam" id="PF01790">
    <property type="entry name" value="LGT"/>
    <property type="match status" value="1"/>
</dbReference>
<dbReference type="PROSITE" id="PS01311">
    <property type="entry name" value="LGT"/>
    <property type="match status" value="1"/>
</dbReference>
<feature type="chain" id="PRO_1000085074" description="Phosphatidylglycerol--prolipoprotein diacylglyceryl transferase">
    <location>
        <begin position="1"/>
        <end position="291"/>
    </location>
</feature>
<feature type="transmembrane region" description="Helical" evidence="1">
    <location>
        <begin position="21"/>
        <end position="41"/>
    </location>
</feature>
<feature type="transmembrane region" description="Helical" evidence="1">
    <location>
        <begin position="60"/>
        <end position="80"/>
    </location>
</feature>
<feature type="transmembrane region" description="Helical" evidence="1">
    <location>
        <begin position="96"/>
        <end position="116"/>
    </location>
</feature>
<feature type="transmembrane region" description="Helical" evidence="1">
    <location>
        <begin position="225"/>
        <end position="245"/>
    </location>
</feature>
<feature type="transmembrane region" description="Helical" evidence="1">
    <location>
        <begin position="260"/>
        <end position="280"/>
    </location>
</feature>
<feature type="binding site" evidence="1">
    <location>
        <position position="143"/>
    </location>
    <ligand>
        <name>a 1,2-diacyl-sn-glycero-3-phospho-(1'-sn-glycerol)</name>
        <dbReference type="ChEBI" id="CHEBI:64716"/>
    </ligand>
</feature>
<organism>
    <name type="scientific">Escherichia coli (strain ATCC 8739 / DSM 1576 / NBRC 3972 / NCIMB 8545 / WDCM 00012 / Crooks)</name>
    <dbReference type="NCBI Taxonomy" id="481805"/>
    <lineage>
        <taxon>Bacteria</taxon>
        <taxon>Pseudomonadati</taxon>
        <taxon>Pseudomonadota</taxon>
        <taxon>Gammaproteobacteria</taxon>
        <taxon>Enterobacterales</taxon>
        <taxon>Enterobacteriaceae</taxon>
        <taxon>Escherichia</taxon>
    </lineage>
</organism>
<accession>B1IU16</accession>
<gene>
    <name evidence="1" type="primary">lgt</name>
    <name type="ordered locus">EcolC_0887</name>
</gene>
<sequence length="291" mass="33108">MTSSYLHFPEFDPVIFSIGPVALHWYGLMYLVGFIFAMWLATRRANRPGSGWTKNEVENLLYAGFLGVFLGGRIGYVLFYNFPQFMADPLYLFRVWDGGMSFHGGLIGVIVVMIIFARRTKRSFFQVSDFIAPLIPFGLGAGRLGNFINGELWGRVDPNFPFAMLFPGSRTEDILLLQTNPQWQSIFDTYGVLPRHPSQLYELLLEGVVLFIILNLYIRKPRPMGAVSGLFLIGYGAFRIIVEFFRQPDAQFTGAWVQYISMGQILSIPMIVAGVIMMVWAYRRSPQQHVS</sequence>
<keyword id="KW-0997">Cell inner membrane</keyword>
<keyword id="KW-1003">Cell membrane</keyword>
<keyword id="KW-0472">Membrane</keyword>
<keyword id="KW-0808">Transferase</keyword>
<keyword id="KW-0812">Transmembrane</keyword>
<keyword id="KW-1133">Transmembrane helix</keyword>